<gene>
    <name evidence="1" type="primary">atpC</name>
    <name type="ordered locus">SPC_3949</name>
</gene>
<feature type="chain" id="PRO_1000146345" description="ATP synthase epsilon chain">
    <location>
        <begin position="1"/>
        <end position="139"/>
    </location>
</feature>
<keyword id="KW-0066">ATP synthesis</keyword>
<keyword id="KW-0997">Cell inner membrane</keyword>
<keyword id="KW-1003">Cell membrane</keyword>
<keyword id="KW-0139">CF(1)</keyword>
<keyword id="KW-0375">Hydrogen ion transport</keyword>
<keyword id="KW-0406">Ion transport</keyword>
<keyword id="KW-0472">Membrane</keyword>
<keyword id="KW-0813">Transport</keyword>
<proteinExistence type="inferred from homology"/>
<reference key="1">
    <citation type="journal article" date="2009" name="PLoS ONE">
        <title>Salmonella paratyphi C: genetic divergence from Salmonella choleraesuis and pathogenic convergence with Salmonella typhi.</title>
        <authorList>
            <person name="Liu W.-Q."/>
            <person name="Feng Y."/>
            <person name="Wang Y."/>
            <person name="Zou Q.-H."/>
            <person name="Chen F."/>
            <person name="Guo J.-T."/>
            <person name="Peng Y.-H."/>
            <person name="Jin Y."/>
            <person name="Li Y.-G."/>
            <person name="Hu S.-N."/>
            <person name="Johnston R.N."/>
            <person name="Liu G.-R."/>
            <person name="Liu S.-L."/>
        </authorList>
    </citation>
    <scope>NUCLEOTIDE SEQUENCE [LARGE SCALE GENOMIC DNA]</scope>
    <source>
        <strain>RKS4594</strain>
    </source>
</reference>
<organism>
    <name type="scientific">Salmonella paratyphi C (strain RKS4594)</name>
    <dbReference type="NCBI Taxonomy" id="476213"/>
    <lineage>
        <taxon>Bacteria</taxon>
        <taxon>Pseudomonadati</taxon>
        <taxon>Pseudomonadota</taxon>
        <taxon>Gammaproteobacteria</taxon>
        <taxon>Enterobacterales</taxon>
        <taxon>Enterobacteriaceae</taxon>
        <taxon>Salmonella</taxon>
    </lineage>
</organism>
<name>ATPE_SALPC</name>
<accession>C0Q2N1</accession>
<sequence length="139" mass="15064">MAMTYHLDVVSAEQQMFSGLVEKIQVTGSEGELGIYPGHAPLLTAIKPGMIRIVKQHGHEEFIYLSGGILEVQPGSVTVLADTAIRGQDLDEARALEAKRKAEEHIKSSHGDVDYAQASAELAKAIAKLRVIELTKKAM</sequence>
<dbReference type="EMBL" id="CP000857">
    <property type="protein sequence ID" value="ACN48017.1"/>
    <property type="molecule type" value="Genomic_DNA"/>
</dbReference>
<dbReference type="RefSeq" id="WP_001251971.1">
    <property type="nucleotide sequence ID" value="NC_012125.1"/>
</dbReference>
<dbReference type="SMR" id="C0Q2N1"/>
<dbReference type="KEGG" id="sei:SPC_3949"/>
<dbReference type="HOGENOM" id="CLU_084338_2_0_6"/>
<dbReference type="Proteomes" id="UP000001599">
    <property type="component" value="Chromosome"/>
</dbReference>
<dbReference type="GO" id="GO:0005886">
    <property type="term" value="C:plasma membrane"/>
    <property type="evidence" value="ECO:0007669"/>
    <property type="project" value="UniProtKB-SubCell"/>
</dbReference>
<dbReference type="GO" id="GO:0045259">
    <property type="term" value="C:proton-transporting ATP synthase complex"/>
    <property type="evidence" value="ECO:0007669"/>
    <property type="project" value="UniProtKB-KW"/>
</dbReference>
<dbReference type="GO" id="GO:0005524">
    <property type="term" value="F:ATP binding"/>
    <property type="evidence" value="ECO:0007669"/>
    <property type="project" value="UniProtKB-UniRule"/>
</dbReference>
<dbReference type="GO" id="GO:0046933">
    <property type="term" value="F:proton-transporting ATP synthase activity, rotational mechanism"/>
    <property type="evidence" value="ECO:0007669"/>
    <property type="project" value="UniProtKB-UniRule"/>
</dbReference>
<dbReference type="CDD" id="cd12152">
    <property type="entry name" value="F1-ATPase_delta"/>
    <property type="match status" value="1"/>
</dbReference>
<dbReference type="FunFam" id="1.20.5.440:FF:000001">
    <property type="entry name" value="ATP synthase epsilon chain"/>
    <property type="match status" value="1"/>
</dbReference>
<dbReference type="FunFam" id="2.60.15.10:FF:000001">
    <property type="entry name" value="ATP synthase epsilon chain"/>
    <property type="match status" value="1"/>
</dbReference>
<dbReference type="Gene3D" id="1.20.5.440">
    <property type="entry name" value="ATP synthase delta/epsilon subunit, C-terminal domain"/>
    <property type="match status" value="1"/>
</dbReference>
<dbReference type="Gene3D" id="2.60.15.10">
    <property type="entry name" value="F0F1 ATP synthase delta/epsilon subunit, N-terminal"/>
    <property type="match status" value="1"/>
</dbReference>
<dbReference type="HAMAP" id="MF_00530">
    <property type="entry name" value="ATP_synth_epsil_bac"/>
    <property type="match status" value="1"/>
</dbReference>
<dbReference type="InterPro" id="IPR036794">
    <property type="entry name" value="ATP_F1_dsu/esu_C_sf"/>
</dbReference>
<dbReference type="InterPro" id="IPR001469">
    <property type="entry name" value="ATP_synth_F1_dsu/esu"/>
</dbReference>
<dbReference type="InterPro" id="IPR020546">
    <property type="entry name" value="ATP_synth_F1_dsu/esu_N"/>
</dbReference>
<dbReference type="InterPro" id="IPR020547">
    <property type="entry name" value="ATP_synth_F1_esu_C"/>
</dbReference>
<dbReference type="InterPro" id="IPR036771">
    <property type="entry name" value="ATPsynth_dsu/esu_N"/>
</dbReference>
<dbReference type="NCBIfam" id="TIGR01216">
    <property type="entry name" value="ATP_synt_epsi"/>
    <property type="match status" value="1"/>
</dbReference>
<dbReference type="NCBIfam" id="NF001847">
    <property type="entry name" value="PRK00571.1-4"/>
    <property type="match status" value="1"/>
</dbReference>
<dbReference type="PANTHER" id="PTHR13822">
    <property type="entry name" value="ATP SYNTHASE DELTA/EPSILON CHAIN"/>
    <property type="match status" value="1"/>
</dbReference>
<dbReference type="PANTHER" id="PTHR13822:SF10">
    <property type="entry name" value="ATP SYNTHASE EPSILON CHAIN, CHLOROPLASTIC"/>
    <property type="match status" value="1"/>
</dbReference>
<dbReference type="Pfam" id="PF00401">
    <property type="entry name" value="ATP-synt_DE"/>
    <property type="match status" value="1"/>
</dbReference>
<dbReference type="Pfam" id="PF02823">
    <property type="entry name" value="ATP-synt_DE_N"/>
    <property type="match status" value="1"/>
</dbReference>
<dbReference type="SUPFAM" id="SSF46604">
    <property type="entry name" value="Epsilon subunit of F1F0-ATP synthase C-terminal domain"/>
    <property type="match status" value="1"/>
</dbReference>
<dbReference type="SUPFAM" id="SSF51344">
    <property type="entry name" value="Epsilon subunit of F1F0-ATP synthase N-terminal domain"/>
    <property type="match status" value="1"/>
</dbReference>
<comment type="function">
    <text evidence="1">Produces ATP from ADP in the presence of a proton gradient across the membrane.</text>
</comment>
<comment type="subunit">
    <text evidence="1">F-type ATPases have 2 components, CF(1) - the catalytic core - and CF(0) - the membrane proton channel. CF(1) has five subunits: alpha(3), beta(3), gamma(1), delta(1), epsilon(1). CF(0) has three main subunits: a, b and c.</text>
</comment>
<comment type="subcellular location">
    <subcellularLocation>
        <location evidence="1">Cell inner membrane</location>
        <topology evidence="1">Peripheral membrane protein</topology>
    </subcellularLocation>
</comment>
<comment type="similarity">
    <text evidence="1">Belongs to the ATPase epsilon chain family.</text>
</comment>
<protein>
    <recommendedName>
        <fullName evidence="1">ATP synthase epsilon chain</fullName>
    </recommendedName>
    <alternativeName>
        <fullName evidence="1">ATP synthase F1 sector epsilon subunit</fullName>
    </alternativeName>
    <alternativeName>
        <fullName evidence="1">F-ATPase epsilon subunit</fullName>
    </alternativeName>
</protein>
<evidence type="ECO:0000255" key="1">
    <source>
        <dbReference type="HAMAP-Rule" id="MF_00530"/>
    </source>
</evidence>